<protein>
    <recommendedName>
        <fullName evidence="1">ATP synthase subunit c</fullName>
    </recommendedName>
    <alternativeName>
        <fullName evidence="1">ATP synthase F(0) sector subunit c</fullName>
    </alternativeName>
    <alternativeName>
        <fullName evidence="1">F-type ATPase subunit c</fullName>
        <shortName evidence="1">F-ATPase subunit c</shortName>
    </alternativeName>
    <alternativeName>
        <fullName evidence="1">Lipid-binding protein</fullName>
    </alternativeName>
</protein>
<sequence>MSSFIDITNVISSHIEANLPAIASENVGSLANGAGIAYLGKYIGTGITMLAAGAVGLMQGFSTANAVQAVARNPEAQPKILSTMIVGLALAEAVAIYALIVSILIIFVA</sequence>
<name>ATPL_UREP2</name>
<feature type="chain" id="PRO_0000365938" description="ATP synthase subunit c">
    <location>
        <begin position="1"/>
        <end position="109"/>
    </location>
</feature>
<feature type="transmembrane region" description="Helical" evidence="1">
    <location>
        <begin position="42"/>
        <end position="62"/>
    </location>
</feature>
<feature type="transmembrane region" description="Helical" evidence="1">
    <location>
        <begin position="88"/>
        <end position="108"/>
    </location>
</feature>
<feature type="site" description="Reversibly protonated during proton transport" evidence="1">
    <location>
        <position position="92"/>
    </location>
</feature>
<proteinExistence type="inferred from homology"/>
<keyword id="KW-0066">ATP synthesis</keyword>
<keyword id="KW-1003">Cell membrane</keyword>
<keyword id="KW-0138">CF(0)</keyword>
<keyword id="KW-0375">Hydrogen ion transport</keyword>
<keyword id="KW-0406">Ion transport</keyword>
<keyword id="KW-0446">Lipid-binding</keyword>
<keyword id="KW-0472">Membrane</keyword>
<keyword id="KW-0812">Transmembrane</keyword>
<keyword id="KW-1133">Transmembrane helix</keyword>
<keyword id="KW-0813">Transport</keyword>
<organism>
    <name type="scientific">Ureaplasma parvum serovar 3 (strain ATCC 27815 / 27 / NCTC 11736)</name>
    <dbReference type="NCBI Taxonomy" id="505682"/>
    <lineage>
        <taxon>Bacteria</taxon>
        <taxon>Bacillati</taxon>
        <taxon>Mycoplasmatota</taxon>
        <taxon>Mycoplasmoidales</taxon>
        <taxon>Mycoplasmoidaceae</taxon>
        <taxon>Ureaplasma</taxon>
    </lineage>
</organism>
<accession>B1AIC5</accession>
<reference key="1">
    <citation type="submission" date="2008-02" db="EMBL/GenBank/DDBJ databases">
        <title>Genome sequence of Ureaplasma parvum serovar 3.</title>
        <authorList>
            <person name="Methe B.A."/>
            <person name="Glass J."/>
            <person name="Waites K."/>
            <person name="Shrivastava S."/>
        </authorList>
    </citation>
    <scope>NUCLEOTIDE SEQUENCE [LARGE SCALE GENOMIC DNA]</scope>
    <source>
        <strain>ATCC 27815 / 27 / NCTC 11736</strain>
    </source>
</reference>
<comment type="function">
    <text evidence="1">F(1)F(0) ATP synthase produces ATP from ADP in the presence of a proton or sodium gradient. F-type ATPases consist of two structural domains, F(1) containing the extramembraneous catalytic core and F(0) containing the membrane proton channel, linked together by a central stalk and a peripheral stalk. During catalysis, ATP synthesis in the catalytic domain of F(1) is coupled via a rotary mechanism of the central stalk subunits to proton translocation.</text>
</comment>
<comment type="function">
    <text evidence="1">Key component of the F(0) channel; it plays a direct role in translocation across the membrane. A homomeric c-ring of between 10-14 subunits forms the central stalk rotor element with the F(1) delta and epsilon subunits.</text>
</comment>
<comment type="subunit">
    <text evidence="1">F-type ATPases have 2 components, F(1) - the catalytic core - and F(0) - the membrane proton channel. F(1) has five subunits: alpha(3), beta(3), gamma(1), delta(1), epsilon(1). F(0) has three main subunits: a(1), b(2) and c(10-14). The alpha and beta chains form an alternating ring which encloses part of the gamma chain. F(1) is attached to F(0) by a central stalk formed by the gamma and epsilon chains, while a peripheral stalk is formed by the delta and b chains.</text>
</comment>
<comment type="subcellular location">
    <subcellularLocation>
        <location evidence="1">Cell membrane</location>
        <topology evidence="1">Multi-pass membrane protein</topology>
    </subcellularLocation>
</comment>
<comment type="similarity">
    <text evidence="1">Belongs to the ATPase C chain family.</text>
</comment>
<evidence type="ECO:0000255" key="1">
    <source>
        <dbReference type="HAMAP-Rule" id="MF_01396"/>
    </source>
</evidence>
<dbReference type="EMBL" id="CP000942">
    <property type="protein sequence ID" value="ACA32951.1"/>
    <property type="molecule type" value="Genomic_DNA"/>
</dbReference>
<dbReference type="RefSeq" id="WP_006688882.1">
    <property type="nucleotide sequence ID" value="NC_010503.1"/>
</dbReference>
<dbReference type="SMR" id="B1AIC5"/>
<dbReference type="GeneID" id="29672138"/>
<dbReference type="KEGG" id="upa:UPA3_0142"/>
<dbReference type="HOGENOM" id="CLU_2182821_0_0_14"/>
<dbReference type="Proteomes" id="UP000002162">
    <property type="component" value="Chromosome"/>
</dbReference>
<dbReference type="GO" id="GO:0005886">
    <property type="term" value="C:plasma membrane"/>
    <property type="evidence" value="ECO:0007669"/>
    <property type="project" value="UniProtKB-SubCell"/>
</dbReference>
<dbReference type="GO" id="GO:0045259">
    <property type="term" value="C:proton-transporting ATP synthase complex"/>
    <property type="evidence" value="ECO:0007669"/>
    <property type="project" value="UniProtKB-KW"/>
</dbReference>
<dbReference type="GO" id="GO:0033177">
    <property type="term" value="C:proton-transporting two-sector ATPase complex, proton-transporting domain"/>
    <property type="evidence" value="ECO:0007669"/>
    <property type="project" value="InterPro"/>
</dbReference>
<dbReference type="GO" id="GO:0008289">
    <property type="term" value="F:lipid binding"/>
    <property type="evidence" value="ECO:0007669"/>
    <property type="project" value="UniProtKB-KW"/>
</dbReference>
<dbReference type="GO" id="GO:0046933">
    <property type="term" value="F:proton-transporting ATP synthase activity, rotational mechanism"/>
    <property type="evidence" value="ECO:0007669"/>
    <property type="project" value="UniProtKB-UniRule"/>
</dbReference>
<dbReference type="CDD" id="cd18184">
    <property type="entry name" value="ATP-synt_Fo_c_NaATPase"/>
    <property type="match status" value="1"/>
</dbReference>
<dbReference type="Gene3D" id="1.20.20.10">
    <property type="entry name" value="F1F0 ATP synthase subunit C"/>
    <property type="match status" value="1"/>
</dbReference>
<dbReference type="HAMAP" id="MF_01396">
    <property type="entry name" value="ATP_synth_c_bact"/>
    <property type="match status" value="1"/>
</dbReference>
<dbReference type="InterPro" id="IPR000454">
    <property type="entry name" value="ATP_synth_F0_csu"/>
</dbReference>
<dbReference type="InterPro" id="IPR020537">
    <property type="entry name" value="ATP_synth_F0_csu_DDCD_BS"/>
</dbReference>
<dbReference type="InterPro" id="IPR038662">
    <property type="entry name" value="ATP_synth_F0_csu_sf"/>
</dbReference>
<dbReference type="InterPro" id="IPR002379">
    <property type="entry name" value="ATPase_proteolipid_c-like_dom"/>
</dbReference>
<dbReference type="InterPro" id="IPR035921">
    <property type="entry name" value="F/V-ATP_Csub_sf"/>
</dbReference>
<dbReference type="PANTHER" id="PTHR10031">
    <property type="entry name" value="ATP SYNTHASE LIPID-BINDING PROTEIN, MITOCHONDRIAL"/>
    <property type="match status" value="1"/>
</dbReference>
<dbReference type="PANTHER" id="PTHR10031:SF0">
    <property type="entry name" value="ATPASE PROTEIN 9"/>
    <property type="match status" value="1"/>
</dbReference>
<dbReference type="Pfam" id="PF00137">
    <property type="entry name" value="ATP-synt_C"/>
    <property type="match status" value="1"/>
</dbReference>
<dbReference type="PRINTS" id="PR00124">
    <property type="entry name" value="ATPASEC"/>
</dbReference>
<dbReference type="SUPFAM" id="SSF81333">
    <property type="entry name" value="F1F0 ATP synthase subunit C"/>
    <property type="match status" value="1"/>
</dbReference>
<dbReference type="PROSITE" id="PS00605">
    <property type="entry name" value="ATPASE_C"/>
    <property type="match status" value="1"/>
</dbReference>
<gene>
    <name evidence="1" type="primary">atpE</name>
    <name type="ordered locus">UPA3_0142</name>
</gene>